<comment type="function">
    <text evidence="1">Tooth-associated epithelia protein that may participate in structuring the basal lamina at cell-tooth interface.</text>
</comment>
<comment type="subcellular location">
    <subcellularLocation>
        <location evidence="1">Secreted</location>
    </subcellularLocation>
</comment>
<accession>A0A411D538</accession>
<name>SCPPQ_HUMAN</name>
<gene>
    <name evidence="4" type="primary">SCPPPQ1</name>
</gene>
<evidence type="ECO:0000250" key="1">
    <source>
        <dbReference type="UniProtKB" id="D6QY17"/>
    </source>
</evidence>
<evidence type="ECO:0000255" key="2"/>
<evidence type="ECO:0000312" key="3">
    <source>
        <dbReference type="EMBL" id="QAY30012.1"/>
    </source>
</evidence>
<evidence type="ECO:0000312" key="4">
    <source>
        <dbReference type="HGNC" id="HGNC:56851"/>
    </source>
</evidence>
<proteinExistence type="inferred from homology"/>
<reference key="1">
    <citation type="submission" date="2018-12" db="EMBL/GenBank/DDBJ databases">
        <authorList>
            <person name="Moffatt P."/>
            <person name="Nanci A."/>
        </authorList>
    </citation>
    <scope>NUCLEOTIDE SEQUENCE [MRNA]</scope>
</reference>
<reference key="2">
    <citation type="journal article" date="2005" name="Nature">
        <title>Generation and annotation of the DNA sequences of human chromosomes 2 and 4.</title>
        <authorList>
            <person name="Hillier L.W."/>
            <person name="Graves T.A."/>
            <person name="Fulton R.S."/>
            <person name="Fulton L.A."/>
            <person name="Pepin K.H."/>
            <person name="Minx P."/>
            <person name="Wagner-McPherson C."/>
            <person name="Layman D."/>
            <person name="Wylie K."/>
            <person name="Sekhon M."/>
            <person name="Becker M.C."/>
            <person name="Fewell G.A."/>
            <person name="Delehaunty K.D."/>
            <person name="Miner T.L."/>
            <person name="Nash W.E."/>
            <person name="Kremitzki C."/>
            <person name="Oddy L."/>
            <person name="Du H."/>
            <person name="Sun H."/>
            <person name="Bradshaw-Cordum H."/>
            <person name="Ali J."/>
            <person name="Carter J."/>
            <person name="Cordes M."/>
            <person name="Harris A."/>
            <person name="Isak A."/>
            <person name="van Brunt A."/>
            <person name="Nguyen C."/>
            <person name="Du F."/>
            <person name="Courtney L."/>
            <person name="Kalicki J."/>
            <person name="Ozersky P."/>
            <person name="Abbott S."/>
            <person name="Armstrong J."/>
            <person name="Belter E.A."/>
            <person name="Caruso L."/>
            <person name="Cedroni M."/>
            <person name="Cotton M."/>
            <person name="Davidson T."/>
            <person name="Desai A."/>
            <person name="Elliott G."/>
            <person name="Erb T."/>
            <person name="Fronick C."/>
            <person name="Gaige T."/>
            <person name="Haakenson W."/>
            <person name="Haglund K."/>
            <person name="Holmes A."/>
            <person name="Harkins R."/>
            <person name="Kim K."/>
            <person name="Kruchowski S.S."/>
            <person name="Strong C.M."/>
            <person name="Grewal N."/>
            <person name="Goyea E."/>
            <person name="Hou S."/>
            <person name="Levy A."/>
            <person name="Martinka S."/>
            <person name="Mead K."/>
            <person name="McLellan M.D."/>
            <person name="Meyer R."/>
            <person name="Randall-Maher J."/>
            <person name="Tomlinson C."/>
            <person name="Dauphin-Kohlberg S."/>
            <person name="Kozlowicz-Reilly A."/>
            <person name="Shah N."/>
            <person name="Swearengen-Shahid S."/>
            <person name="Snider J."/>
            <person name="Strong J.T."/>
            <person name="Thompson J."/>
            <person name="Yoakum M."/>
            <person name="Leonard S."/>
            <person name="Pearman C."/>
            <person name="Trani L."/>
            <person name="Radionenko M."/>
            <person name="Waligorski J.E."/>
            <person name="Wang C."/>
            <person name="Rock S.M."/>
            <person name="Tin-Wollam A.-M."/>
            <person name="Maupin R."/>
            <person name="Latreille P."/>
            <person name="Wendl M.C."/>
            <person name="Yang S.-P."/>
            <person name="Pohl C."/>
            <person name="Wallis J.W."/>
            <person name="Spieth J."/>
            <person name="Bieri T.A."/>
            <person name="Berkowicz N."/>
            <person name="Nelson J.O."/>
            <person name="Osborne J."/>
            <person name="Ding L."/>
            <person name="Meyer R."/>
            <person name="Sabo A."/>
            <person name="Shotland Y."/>
            <person name="Sinha P."/>
            <person name="Wohldmann P.E."/>
            <person name="Cook L.L."/>
            <person name="Hickenbotham M.T."/>
            <person name="Eldred J."/>
            <person name="Williams D."/>
            <person name="Jones T.A."/>
            <person name="She X."/>
            <person name="Ciccarelli F.D."/>
            <person name="Izaurralde E."/>
            <person name="Taylor J."/>
            <person name="Schmutz J."/>
            <person name="Myers R.M."/>
            <person name="Cox D.R."/>
            <person name="Huang X."/>
            <person name="McPherson J.D."/>
            <person name="Mardis E.R."/>
            <person name="Clifton S.W."/>
            <person name="Warren W.C."/>
            <person name="Chinwalla A.T."/>
            <person name="Eddy S.R."/>
            <person name="Marra M.A."/>
            <person name="Ovcharenko I."/>
            <person name="Furey T.S."/>
            <person name="Miller W."/>
            <person name="Eichler E.E."/>
            <person name="Bork P."/>
            <person name="Suyama M."/>
            <person name="Torrents D."/>
            <person name="Waterston R.H."/>
            <person name="Wilson R.K."/>
        </authorList>
    </citation>
    <scope>NUCLEOTIDE SEQUENCE [LARGE SCALE GENOMIC DNA]</scope>
</reference>
<keyword id="KW-1185">Reference proteome</keyword>
<keyword id="KW-0964">Secreted</keyword>
<keyword id="KW-0732">Signal</keyword>
<sequence>MKFLILAGLLSTATALPIPLEQYAESSSEQRFIFYPPQVPPFFPQVLFPLPPQPPLVLTPNDLIALLIAILNQLGILFP</sequence>
<feature type="signal peptide" evidence="2">
    <location>
        <begin position="1"/>
        <end position="15"/>
    </location>
</feature>
<feature type="chain" id="PRO_5019228459" description="Secretory calcium-binding phosphoprotein proline-glutamine rich 1" evidence="2">
    <location>
        <begin position="16"/>
        <end position="79"/>
    </location>
</feature>
<protein>
    <recommendedName>
        <fullName>Secretory calcium-binding phosphoprotein proline-glutamine rich 1</fullName>
    </recommendedName>
</protein>
<organism evidence="3">
    <name type="scientific">Homo sapiens</name>
    <name type="common">Human</name>
    <dbReference type="NCBI Taxonomy" id="9606"/>
    <lineage>
        <taxon>Eukaryota</taxon>
        <taxon>Metazoa</taxon>
        <taxon>Chordata</taxon>
        <taxon>Craniata</taxon>
        <taxon>Vertebrata</taxon>
        <taxon>Euteleostomi</taxon>
        <taxon>Mammalia</taxon>
        <taxon>Eutheria</taxon>
        <taxon>Euarchontoglires</taxon>
        <taxon>Primates</taxon>
        <taxon>Haplorrhini</taxon>
        <taxon>Catarrhini</taxon>
        <taxon>Hominidae</taxon>
        <taxon>Homo</taxon>
    </lineage>
</organism>
<dbReference type="EMBL" id="MK322956">
    <property type="protein sequence ID" value="QAY30012.1"/>
    <property type="molecule type" value="mRNA"/>
</dbReference>
<dbReference type="EMBL" id="AC112250">
    <property type="status" value="NOT_ANNOTATED_CDS"/>
    <property type="molecule type" value="Genomic_DNA"/>
</dbReference>
<dbReference type="RefSeq" id="NP_001392157.1">
    <property type="nucleotide sequence ID" value="NM_001405228.1"/>
</dbReference>
<dbReference type="Ensembl" id="ENST00000715253.1">
    <property type="protein sequence ID" value="ENSP00000520428.1"/>
    <property type="gene ID" value="ENSG00000272856.2"/>
</dbReference>
<dbReference type="GeneID" id="105377321"/>
<dbReference type="MANE-Select" id="ENST00000715253.1">
    <property type="protein sequence ID" value="ENSP00000520428.1"/>
    <property type="RefSeq nucleotide sequence ID" value="NM_001405228.1"/>
    <property type="RefSeq protein sequence ID" value="NP_001392157.1"/>
</dbReference>
<dbReference type="AGR" id="HGNC:56851"/>
<dbReference type="GeneCards" id="SCPPPQ1"/>
<dbReference type="HGNC" id="HGNC:56851">
    <property type="gene designation" value="SCPPPQ1"/>
</dbReference>
<dbReference type="OpenTargets" id="ENSG00000272856"/>
<dbReference type="GeneTree" id="ENSGT00700000106112"/>
<dbReference type="PRO" id="PR:A0A411D538"/>
<dbReference type="Proteomes" id="UP000005640">
    <property type="component" value="Chromosome 4"/>
</dbReference>
<dbReference type="GO" id="GO:0005576">
    <property type="term" value="C:extracellular region"/>
    <property type="evidence" value="ECO:0007669"/>
    <property type="project" value="UniProtKB-SubCell"/>
</dbReference>